<keyword id="KW-1267">Proteomics identification</keyword>
<keyword id="KW-1185">Reference proteome</keyword>
<evidence type="ECO:0000256" key="1">
    <source>
        <dbReference type="SAM" id="MobiDB-lite"/>
    </source>
</evidence>
<evidence type="ECO:0000269" key="2">
    <source>
    </source>
</evidence>
<dbReference type="EMBL" id="DQ860102">
    <property type="protein sequence ID" value="ABI64147.1"/>
    <property type="molecule type" value="mRNA"/>
</dbReference>
<dbReference type="CCDS" id="CCDS42656.1"/>
<dbReference type="RefSeq" id="NP_001092688.1">
    <property type="nucleotide sequence ID" value="NM_001099218.3"/>
</dbReference>
<dbReference type="BioGRID" id="609874">
    <property type="interactions" value="5"/>
</dbReference>
<dbReference type="FunCoup" id="Q09MP3">
    <property type="interactions" value="5"/>
</dbReference>
<dbReference type="IntAct" id="Q09MP3">
    <property type="interactions" value="2"/>
</dbReference>
<dbReference type="STRING" id="9606.ENSP00000382030"/>
<dbReference type="GlyGen" id="Q09MP3">
    <property type="glycosylation" value="1 site"/>
</dbReference>
<dbReference type="iPTMnet" id="Q09MP3"/>
<dbReference type="PhosphoSitePlus" id="Q09MP3"/>
<dbReference type="BioMuta" id="RAD51AP2"/>
<dbReference type="DMDM" id="121940162"/>
<dbReference type="jPOST" id="Q09MP3"/>
<dbReference type="MassIVE" id="Q09MP3"/>
<dbReference type="PaxDb" id="9606-ENSP00000382030"/>
<dbReference type="PeptideAtlas" id="Q09MP3"/>
<dbReference type="ProteomicsDB" id="58732"/>
<dbReference type="Antibodypedia" id="64463">
    <property type="antibodies" value="3 antibodies from 3 providers"/>
</dbReference>
<dbReference type="DNASU" id="729475"/>
<dbReference type="Ensembl" id="ENST00000399080.3">
    <property type="protein sequence ID" value="ENSP00000382030.2"/>
    <property type="gene ID" value="ENSG00000214842.6"/>
</dbReference>
<dbReference type="GeneID" id="729475"/>
<dbReference type="KEGG" id="hsa:729475"/>
<dbReference type="MANE-Select" id="ENST00000399080.3">
    <property type="protein sequence ID" value="ENSP00000382030.2"/>
    <property type="RefSeq nucleotide sequence ID" value="NM_001099218.3"/>
    <property type="RefSeq protein sequence ID" value="NP_001092688.1"/>
</dbReference>
<dbReference type="UCSC" id="uc002rcl.2">
    <property type="organism name" value="human"/>
</dbReference>
<dbReference type="AGR" id="HGNC:34417"/>
<dbReference type="CTD" id="729475"/>
<dbReference type="GeneCards" id="RAD51AP2"/>
<dbReference type="HGNC" id="HGNC:34417">
    <property type="gene designation" value="RAD51AP2"/>
</dbReference>
<dbReference type="HPA" id="ENSG00000214842">
    <property type="expression patterns" value="Tissue enriched (testis)"/>
</dbReference>
<dbReference type="neXtProt" id="NX_Q09MP3"/>
<dbReference type="OpenTargets" id="ENSG00000214842"/>
<dbReference type="PharmGKB" id="PA164725260"/>
<dbReference type="VEuPathDB" id="HostDB:ENSG00000214842"/>
<dbReference type="eggNOG" id="ENOG502RZS1">
    <property type="taxonomic scope" value="Eukaryota"/>
</dbReference>
<dbReference type="GeneTree" id="ENSGT00470000042500"/>
<dbReference type="HOGENOM" id="CLU_282233_0_0_1"/>
<dbReference type="InParanoid" id="Q09MP3"/>
<dbReference type="OMA" id="GGSHFPH"/>
<dbReference type="OrthoDB" id="9934401at2759"/>
<dbReference type="PAN-GO" id="Q09MP3">
    <property type="GO annotations" value="4 GO annotations based on evolutionary models"/>
</dbReference>
<dbReference type="PhylomeDB" id="Q09MP3"/>
<dbReference type="PathwayCommons" id="Q09MP3"/>
<dbReference type="SignaLink" id="Q09MP3"/>
<dbReference type="BioGRID-ORCS" id="729475">
    <property type="hits" value="13 hits in 1144 CRISPR screens"/>
</dbReference>
<dbReference type="ChiTaRS" id="RAD51AP2">
    <property type="organism name" value="human"/>
</dbReference>
<dbReference type="GenomeRNAi" id="729475"/>
<dbReference type="Pharos" id="Q09MP3">
    <property type="development level" value="Tdark"/>
</dbReference>
<dbReference type="PRO" id="PR:Q09MP3"/>
<dbReference type="Proteomes" id="UP000005640">
    <property type="component" value="Chromosome 2"/>
</dbReference>
<dbReference type="RNAct" id="Q09MP3">
    <property type="molecule type" value="protein"/>
</dbReference>
<dbReference type="Bgee" id="ENSG00000214842">
    <property type="expression patterns" value="Expressed in male germ line stem cell (sensu Vertebrata) in testis and 45 other cell types or tissues"/>
</dbReference>
<dbReference type="GO" id="GO:0032991">
    <property type="term" value="C:protein-containing complex"/>
    <property type="evidence" value="ECO:0000315"/>
    <property type="project" value="UniProtKB"/>
</dbReference>
<dbReference type="InterPro" id="IPR053355">
    <property type="entry name" value="RAD51-associated"/>
</dbReference>
<dbReference type="InterPro" id="IPR031419">
    <property type="entry name" value="RAD51_interact"/>
</dbReference>
<dbReference type="PANTHER" id="PTHR39229">
    <property type="entry name" value="MCG1037962"/>
    <property type="match status" value="1"/>
</dbReference>
<dbReference type="PANTHER" id="PTHR39229:SF1">
    <property type="entry name" value="RAD51-ASSOCIATED PROTEIN 2"/>
    <property type="match status" value="1"/>
</dbReference>
<dbReference type="Pfam" id="PF15696">
    <property type="entry name" value="RAD51_interact"/>
    <property type="match status" value="1"/>
</dbReference>
<feature type="chain" id="PRO_0000336071" description="RAD51-associated protein 2">
    <location>
        <begin position="1"/>
        <end position="1159"/>
    </location>
</feature>
<feature type="region of interest" description="Disordered" evidence="1">
    <location>
        <begin position="1"/>
        <end position="35"/>
    </location>
</feature>
<feature type="region of interest" description="Interaction with RAD51" evidence="2">
    <location>
        <begin position="1111"/>
        <end position="1159"/>
    </location>
</feature>
<feature type="sequence variant" id="VAR_043478" description="In dbSNP:rs17380212.">
    <original>V</original>
    <variation>L</variation>
    <location>
        <position position="876"/>
    </location>
</feature>
<feature type="sequence variant" id="VAR_043479" description="In dbSNP:rs17314548.">
    <original>R</original>
    <variation>H</variation>
    <location>
        <position position="976"/>
    </location>
</feature>
<feature type="sequence variant" id="VAR_043480" description="In dbSNP:rs834514.">
    <original>G</original>
    <variation>D</variation>
    <location>
        <position position="1037"/>
    </location>
</feature>
<feature type="mutagenesis site" description="Strongly decreases interaction with RAD51; when associated with 1143-AA-1144." evidence="2">
    <original>L</original>
    <variation>A</variation>
    <location>
        <position position="1134"/>
    </location>
</feature>
<feature type="mutagenesis site" description="Strongly decreases interaction with RAD51; when associated with A-1134." evidence="2">
    <original>LH</original>
    <variation>AA</variation>
    <location>
        <begin position="1143"/>
        <end position="1144"/>
    </location>
</feature>
<accession>Q09MP3</accession>
<sequence length="1159" mass="133907">MSLPQPTPRMAELRKPTSSLTPPEDPDSQPPSSKRLCLEEPGGVFKAGWRLPLVPRLSEAEKVWELSPRPFKGLLVSTNAIFDNSTDSCVEKSVSGKQICNLKCSNLKFQMSSCLQSPPSQSPDSDLRASGRSEAGLHDREAFSVHRSNSSKAGVSQLLPSTSIHDIHGIRNENRKQQFVQGRDNVHKENPFLDVTFYKETKSPFHEIKNRCKANSVVPSNKRENNISSSVLKISKSQNQPSLEIAKPSYFRDSGTISVPQFPMDLNSKMSSVYLKEIAKKKNDKKEAYVRDFTNIYWSQNRPDVKKQKLQNDKKTVEAENIFSKCYENDYPSLSSQNTCKRKDLISSNYCNCSSIQCNVRDSRKNFAILENANWEEAECLDSYVLTRLEKSQNWDCNVRHILRRNRGNCWIINNCKTKCENMKKTEEKWNWLLLLEIDLLSKEDYHCAKVINAYEEQSKLLVREILGSQTALITTVWLNGKGENDNTLQLRYNTTQKVFHVNNPFESFIIEIFYFHKSISGNKKDNSILTCCNILKCKKQIGIIGIQNLITRNMNTNIKNGILSIYLQDSVSEPLDILLKTNIAFLLNNFDSLTRIENDFELEEECIFKCMLYLKYPKNIVENHTAYLVKILTSSRLLEDNMKPMLKKRKLFRTEQVFEKSKKKLINSFSMTTQNTGFPIFETYEKIPLLMDFDDMDEISLIREITCQNMSCPQQVVNVENWAHYNSSTVKAHGNSCPQFIQNNRGYINENFYEVNMHSQDLNMERKQGHNKISNFDCEHIFEDLCNVRQQAIPASHNIIHNEETHTTSITQVLNFWNLLSEIEEKKYDLILKEEVKVTAESLTNSCQVHKDTKIEKEEKDSFFPMDDMFSVQSVSLISKEVNVEENKYVNQNYVTNTNEYESILPEREIANSKDFHRKNDSALYINHQFETGLSEGNDECFQDLAAKYLSTEALTIVKDFEMKRKFDLVLEELRMFHEISRENELLSTVETNNGQENYFGENDAEKVKMEIEKDLKMVVVNKIRASSSFHDTIAGPNMGKSHQSLFKWKTVPNNGEQEVPNESCYPSRSEEELLYSTSEKDCETPLPKRPAFLPDECKEEFNYLLRGGSHFPHGISRVRPLKTCSRPIRIGLSRKARIKQLHPYLKQMCYGNLKENF</sequence>
<proteinExistence type="evidence at protein level"/>
<organism>
    <name type="scientific">Homo sapiens</name>
    <name type="common">Human</name>
    <dbReference type="NCBI Taxonomy" id="9606"/>
    <lineage>
        <taxon>Eukaryota</taxon>
        <taxon>Metazoa</taxon>
        <taxon>Chordata</taxon>
        <taxon>Craniata</taxon>
        <taxon>Vertebrata</taxon>
        <taxon>Euteleostomi</taxon>
        <taxon>Mammalia</taxon>
        <taxon>Eutheria</taxon>
        <taxon>Euarchontoglires</taxon>
        <taxon>Primates</taxon>
        <taxon>Haplorrhini</taxon>
        <taxon>Catarrhini</taxon>
        <taxon>Hominidae</taxon>
        <taxon>Homo</taxon>
    </lineage>
</organism>
<protein>
    <recommendedName>
        <fullName>RAD51-associated protein 2</fullName>
    </recommendedName>
</protein>
<name>R51A2_HUMAN</name>
<comment type="subunit">
    <text evidence="2">Interacts with RAD51.</text>
</comment>
<comment type="tissue specificity">
    <text evidence="2">Specifically expressed in meiotic tissues. Highly expressed in testis.</text>
</comment>
<reference key="1">
    <citation type="journal article" date="2006" name="Nucleic Acids Res.">
        <title>RAD51AP2, a novel vertebrate- and meiotic-specific protein, shares a conserved RAD51-interacting C-terminal domain with RAD51AP1/PIR51.</title>
        <authorList>
            <person name="Kovalenko O.V."/>
            <person name="Wiese C."/>
            <person name="Schild D."/>
        </authorList>
    </citation>
    <scope>NUCLEOTIDE SEQUENCE [MRNA]</scope>
    <scope>INTERACTION WITH RAD51</scope>
    <scope>TISSUE SPECIFICITY</scope>
    <scope>MUTAGENESIS OF LEU-1134 AND 1143-LEU-HIS-1144</scope>
    <source>
        <tissue>Testis</tissue>
    </source>
</reference>
<gene>
    <name type="primary">RAD51AP2</name>
</gene>